<proteinExistence type="inferred from homology"/>
<name>RS4_BORRA</name>
<accession>B5RPW0</accession>
<gene>
    <name evidence="1" type="primary">rpsD</name>
    <name type="ordered locus">BRE_620</name>
</gene>
<sequence>MNRKSIAKGKLVRRFGVNIFEQPKYDKLLKKKTNPPGMHGRSRRTKVTEYGKQLIEKQKVKFTYGVSERQLTNVFKEARRQHGVTGDNLLALLERRIDNIVYRAGFAISRAHARQIVSHGIIILNGRRVTIPSITLRANDIIQVKEKDSFKKLVRSNIEKTSTLRKLPDWIEVNADALNVKIIRTPSRDEIPTLANEQMIVEYYSKRA</sequence>
<evidence type="ECO:0000255" key="1">
    <source>
        <dbReference type="HAMAP-Rule" id="MF_01306"/>
    </source>
</evidence>
<evidence type="ECO:0000305" key="2"/>
<protein>
    <recommendedName>
        <fullName evidence="1">Small ribosomal subunit protein uS4</fullName>
    </recommendedName>
    <alternativeName>
        <fullName evidence="2">30S ribosomal protein S4</fullName>
    </alternativeName>
</protein>
<keyword id="KW-0687">Ribonucleoprotein</keyword>
<keyword id="KW-0689">Ribosomal protein</keyword>
<keyword id="KW-0694">RNA-binding</keyword>
<keyword id="KW-0699">rRNA-binding</keyword>
<dbReference type="EMBL" id="CP000993">
    <property type="protein sequence ID" value="ACH94844.1"/>
    <property type="molecule type" value="Genomic_DNA"/>
</dbReference>
<dbReference type="RefSeq" id="WP_012539034.1">
    <property type="nucleotide sequence ID" value="NC_011244.1"/>
</dbReference>
<dbReference type="SMR" id="B5RPW0"/>
<dbReference type="KEGG" id="bre:BRE_620"/>
<dbReference type="HOGENOM" id="CLU_092403_0_4_12"/>
<dbReference type="Proteomes" id="UP000000612">
    <property type="component" value="Chromosome"/>
</dbReference>
<dbReference type="GO" id="GO:0015935">
    <property type="term" value="C:small ribosomal subunit"/>
    <property type="evidence" value="ECO:0007669"/>
    <property type="project" value="InterPro"/>
</dbReference>
<dbReference type="GO" id="GO:0019843">
    <property type="term" value="F:rRNA binding"/>
    <property type="evidence" value="ECO:0007669"/>
    <property type="project" value="UniProtKB-UniRule"/>
</dbReference>
<dbReference type="GO" id="GO:0003735">
    <property type="term" value="F:structural constituent of ribosome"/>
    <property type="evidence" value="ECO:0007669"/>
    <property type="project" value="InterPro"/>
</dbReference>
<dbReference type="GO" id="GO:0042274">
    <property type="term" value="P:ribosomal small subunit biogenesis"/>
    <property type="evidence" value="ECO:0007669"/>
    <property type="project" value="TreeGrafter"/>
</dbReference>
<dbReference type="GO" id="GO:0006412">
    <property type="term" value="P:translation"/>
    <property type="evidence" value="ECO:0007669"/>
    <property type="project" value="UniProtKB-UniRule"/>
</dbReference>
<dbReference type="CDD" id="cd00165">
    <property type="entry name" value="S4"/>
    <property type="match status" value="1"/>
</dbReference>
<dbReference type="FunFam" id="3.10.290.10:FF:000001">
    <property type="entry name" value="30S ribosomal protein S4"/>
    <property type="match status" value="1"/>
</dbReference>
<dbReference type="Gene3D" id="1.10.1050.10">
    <property type="entry name" value="Ribosomal Protein S4 Delta 41, Chain A, domain 1"/>
    <property type="match status" value="1"/>
</dbReference>
<dbReference type="Gene3D" id="3.10.290.10">
    <property type="entry name" value="RNA-binding S4 domain"/>
    <property type="match status" value="1"/>
</dbReference>
<dbReference type="HAMAP" id="MF_01306_B">
    <property type="entry name" value="Ribosomal_uS4_B"/>
    <property type="match status" value="1"/>
</dbReference>
<dbReference type="InterPro" id="IPR022801">
    <property type="entry name" value="Ribosomal_uS4"/>
</dbReference>
<dbReference type="InterPro" id="IPR005709">
    <property type="entry name" value="Ribosomal_uS4_bac-type"/>
</dbReference>
<dbReference type="InterPro" id="IPR018079">
    <property type="entry name" value="Ribosomal_uS4_CS"/>
</dbReference>
<dbReference type="InterPro" id="IPR001912">
    <property type="entry name" value="Ribosomal_uS4_N"/>
</dbReference>
<dbReference type="InterPro" id="IPR002942">
    <property type="entry name" value="S4_RNA-bd"/>
</dbReference>
<dbReference type="InterPro" id="IPR036986">
    <property type="entry name" value="S4_RNA-bd_sf"/>
</dbReference>
<dbReference type="NCBIfam" id="NF003717">
    <property type="entry name" value="PRK05327.1"/>
    <property type="match status" value="1"/>
</dbReference>
<dbReference type="NCBIfam" id="TIGR01017">
    <property type="entry name" value="rpsD_bact"/>
    <property type="match status" value="1"/>
</dbReference>
<dbReference type="PANTHER" id="PTHR11831">
    <property type="entry name" value="30S 40S RIBOSOMAL PROTEIN"/>
    <property type="match status" value="1"/>
</dbReference>
<dbReference type="PANTHER" id="PTHR11831:SF4">
    <property type="entry name" value="SMALL RIBOSOMAL SUBUNIT PROTEIN US4M"/>
    <property type="match status" value="1"/>
</dbReference>
<dbReference type="Pfam" id="PF00163">
    <property type="entry name" value="Ribosomal_S4"/>
    <property type="match status" value="1"/>
</dbReference>
<dbReference type="Pfam" id="PF01479">
    <property type="entry name" value="S4"/>
    <property type="match status" value="1"/>
</dbReference>
<dbReference type="SMART" id="SM01390">
    <property type="entry name" value="Ribosomal_S4"/>
    <property type="match status" value="1"/>
</dbReference>
<dbReference type="SMART" id="SM00363">
    <property type="entry name" value="S4"/>
    <property type="match status" value="1"/>
</dbReference>
<dbReference type="SUPFAM" id="SSF55174">
    <property type="entry name" value="Alpha-L RNA-binding motif"/>
    <property type="match status" value="1"/>
</dbReference>
<dbReference type="PROSITE" id="PS00632">
    <property type="entry name" value="RIBOSOMAL_S4"/>
    <property type="match status" value="1"/>
</dbReference>
<dbReference type="PROSITE" id="PS50889">
    <property type="entry name" value="S4"/>
    <property type="match status" value="1"/>
</dbReference>
<comment type="function">
    <text evidence="1">One of the primary rRNA binding proteins, it binds directly to 16S rRNA where it nucleates assembly of the body of the 30S subunit.</text>
</comment>
<comment type="function">
    <text evidence="1">With S5 and S12 plays an important role in translational accuracy.</text>
</comment>
<comment type="subunit">
    <text evidence="1">Part of the 30S ribosomal subunit. Contacts protein S5. The interaction surface between S4 and S5 is involved in control of translational fidelity.</text>
</comment>
<comment type="similarity">
    <text evidence="1">Belongs to the universal ribosomal protein uS4 family.</text>
</comment>
<organism>
    <name type="scientific">Borrelia recurrentis (strain A1)</name>
    <dbReference type="NCBI Taxonomy" id="412418"/>
    <lineage>
        <taxon>Bacteria</taxon>
        <taxon>Pseudomonadati</taxon>
        <taxon>Spirochaetota</taxon>
        <taxon>Spirochaetia</taxon>
        <taxon>Spirochaetales</taxon>
        <taxon>Borreliaceae</taxon>
        <taxon>Borrelia</taxon>
    </lineage>
</organism>
<feature type="chain" id="PRO_1000140694" description="Small ribosomal subunit protein uS4">
    <location>
        <begin position="1"/>
        <end position="208"/>
    </location>
</feature>
<feature type="domain" description="S4 RNA-binding" evidence="1">
    <location>
        <begin position="95"/>
        <end position="159"/>
    </location>
</feature>
<reference key="1">
    <citation type="journal article" date="2008" name="PLoS Genet.">
        <title>The genome of Borrelia recurrentis, the agent of deadly louse-borne relapsing fever, is a degraded subset of tick-borne Borrelia duttonii.</title>
        <authorList>
            <person name="Lescot M."/>
            <person name="Audic S."/>
            <person name="Robert C."/>
            <person name="Nguyen T.T."/>
            <person name="Blanc G."/>
            <person name="Cutler S.J."/>
            <person name="Wincker P."/>
            <person name="Couloux A."/>
            <person name="Claverie J.-M."/>
            <person name="Raoult D."/>
            <person name="Drancourt M."/>
        </authorList>
    </citation>
    <scope>NUCLEOTIDE SEQUENCE [LARGE SCALE GENOMIC DNA]</scope>
    <source>
        <strain>A1</strain>
    </source>
</reference>